<dbReference type="EMBL" id="U48853">
    <property type="protein sequence ID" value="AAA93381.1"/>
    <property type="molecule type" value="mRNA"/>
</dbReference>
<dbReference type="EMBL" id="U28151">
    <property type="protein sequence ID" value="AAA93248.1"/>
    <property type="molecule type" value="mRNA"/>
</dbReference>
<dbReference type="EMBL" id="AK145863">
    <property type="protein sequence ID" value="BAE26705.1"/>
    <property type="molecule type" value="mRNA"/>
</dbReference>
<dbReference type="EMBL" id="BC057578">
    <property type="protein sequence ID" value="AAH57578.1"/>
    <property type="molecule type" value="mRNA"/>
</dbReference>
<dbReference type="CCDS" id="CCDS52675.1">
    <molecule id="Q61140-1"/>
</dbReference>
<dbReference type="CCDS" id="CCDS85616.1">
    <molecule id="Q61140-2"/>
</dbReference>
<dbReference type="RefSeq" id="NP_001185768.1">
    <molecule id="Q61140-2"/>
    <property type="nucleotide sequence ID" value="NM_001198839.1"/>
</dbReference>
<dbReference type="RefSeq" id="NP_034084.2">
    <molecule id="Q61140-1"/>
    <property type="nucleotide sequence ID" value="NM_009954.3"/>
</dbReference>
<dbReference type="PDB" id="5W93">
    <property type="method" value="X-ray"/>
    <property type="resolution" value="2.00 A"/>
    <property type="chains" value="A/B/C=738-874"/>
</dbReference>
<dbReference type="PDBsum" id="5W93"/>
<dbReference type="SMR" id="Q61140"/>
<dbReference type="BioGRID" id="198886">
    <property type="interactions" value="17"/>
</dbReference>
<dbReference type="CORUM" id="Q61140"/>
<dbReference type="FunCoup" id="Q61140">
    <property type="interactions" value="1156"/>
</dbReference>
<dbReference type="IntAct" id="Q61140">
    <property type="interactions" value="13"/>
</dbReference>
<dbReference type="MINT" id="Q61140"/>
<dbReference type="STRING" id="10090.ENSMUSP00000129584"/>
<dbReference type="GlyGen" id="Q61140">
    <property type="glycosylation" value="5 sites, 2 N-linked glycans (2 sites)"/>
</dbReference>
<dbReference type="iPTMnet" id="Q61140"/>
<dbReference type="PhosphoSitePlus" id="Q61140"/>
<dbReference type="PaxDb" id="10090-ENSMUSP00000129584"/>
<dbReference type="ProteomicsDB" id="273441">
    <molecule id="Q61140-1"/>
</dbReference>
<dbReference type="ProteomicsDB" id="273442">
    <molecule id="Q61140-2"/>
</dbReference>
<dbReference type="Pumba" id="Q61140"/>
<dbReference type="Antibodypedia" id="3607">
    <property type="antibodies" value="860 antibodies from 41 providers"/>
</dbReference>
<dbReference type="DNASU" id="12927"/>
<dbReference type="Ensembl" id="ENSMUST00000166232.4">
    <molecule id="Q61140-1"/>
    <property type="protein sequence ID" value="ENSMUSP00000129584.3"/>
    <property type="gene ID" value="ENSMUSG00000031955.11"/>
</dbReference>
<dbReference type="Ensembl" id="ENSMUST00000212349.2">
    <molecule id="Q61140-2"/>
    <property type="protein sequence ID" value="ENSMUSP00000148364.2"/>
    <property type="gene ID" value="ENSMUSG00000031955.11"/>
</dbReference>
<dbReference type="GeneID" id="12927"/>
<dbReference type="KEGG" id="mmu:12927"/>
<dbReference type="UCSC" id="uc009nmt.2">
    <molecule id="Q61140-2"/>
    <property type="organism name" value="mouse"/>
</dbReference>
<dbReference type="UCSC" id="uc009nmu.2">
    <molecule id="Q61140-1"/>
    <property type="organism name" value="mouse"/>
</dbReference>
<dbReference type="AGR" id="MGI:108091"/>
<dbReference type="CTD" id="9564"/>
<dbReference type="MGI" id="MGI:108091">
    <property type="gene designation" value="Bcar1"/>
</dbReference>
<dbReference type="VEuPathDB" id="HostDB:ENSMUSG00000031955"/>
<dbReference type="eggNOG" id="ENOG502QQHE">
    <property type="taxonomic scope" value="Eukaryota"/>
</dbReference>
<dbReference type="GeneTree" id="ENSGT00950000183008"/>
<dbReference type="HOGENOM" id="CLU_017000_1_0_1"/>
<dbReference type="InParanoid" id="Q61140"/>
<dbReference type="OMA" id="MTPHRPA"/>
<dbReference type="OrthoDB" id="5983572at2759"/>
<dbReference type="PhylomeDB" id="Q61140"/>
<dbReference type="TreeFam" id="TF328782"/>
<dbReference type="Reactome" id="R-MMU-186763">
    <property type="pathway name" value="Downstream signal transduction"/>
</dbReference>
<dbReference type="Reactome" id="R-MMU-372708">
    <property type="pathway name" value="p130Cas linkage to MAPK signaling for integrins"/>
</dbReference>
<dbReference type="Reactome" id="R-MMU-4420097">
    <property type="pathway name" value="VEGFA-VEGFR2 Pathway"/>
</dbReference>
<dbReference type="Reactome" id="R-MMU-8849471">
    <property type="pathway name" value="PTK6 Regulates RHO GTPases, RAS GTPase and MAP kinases"/>
</dbReference>
<dbReference type="BioGRID-ORCS" id="12927">
    <property type="hits" value="4 hits in 78 CRISPR screens"/>
</dbReference>
<dbReference type="ChiTaRS" id="Bcar1">
    <property type="organism name" value="mouse"/>
</dbReference>
<dbReference type="PRO" id="PR:Q61140"/>
<dbReference type="Proteomes" id="UP000000589">
    <property type="component" value="Chromosome 8"/>
</dbReference>
<dbReference type="RNAct" id="Q61140">
    <property type="molecule type" value="protein"/>
</dbReference>
<dbReference type="Bgee" id="ENSMUSG00000031955">
    <property type="expression patterns" value="Expressed in endothelial cell of lymphatic vessel and 261 other cell types or tissues"/>
</dbReference>
<dbReference type="GO" id="GO:0015629">
    <property type="term" value="C:actin cytoskeleton"/>
    <property type="evidence" value="ECO:0000314"/>
    <property type="project" value="MGI"/>
</dbReference>
<dbReference type="GO" id="GO:0030424">
    <property type="term" value="C:axon"/>
    <property type="evidence" value="ECO:0007669"/>
    <property type="project" value="UniProtKB-SubCell"/>
</dbReference>
<dbReference type="GO" id="GO:0005737">
    <property type="term" value="C:cytoplasm"/>
    <property type="evidence" value="ECO:0000250"/>
    <property type="project" value="UniProtKB"/>
</dbReference>
<dbReference type="GO" id="GO:0005829">
    <property type="term" value="C:cytosol"/>
    <property type="evidence" value="ECO:0000304"/>
    <property type="project" value="Reactome"/>
</dbReference>
<dbReference type="GO" id="GO:0005925">
    <property type="term" value="C:focal adhesion"/>
    <property type="evidence" value="ECO:0000314"/>
    <property type="project" value="MGI"/>
</dbReference>
<dbReference type="GO" id="GO:0030027">
    <property type="term" value="C:lamellipodium"/>
    <property type="evidence" value="ECO:0000314"/>
    <property type="project" value="MGI"/>
</dbReference>
<dbReference type="GO" id="GO:0016020">
    <property type="term" value="C:membrane"/>
    <property type="evidence" value="ECO:0000315"/>
    <property type="project" value="UniProtKB"/>
</dbReference>
<dbReference type="GO" id="GO:0005886">
    <property type="term" value="C:plasma membrane"/>
    <property type="evidence" value="ECO:0007669"/>
    <property type="project" value="Ensembl"/>
</dbReference>
<dbReference type="GO" id="GO:0001726">
    <property type="term" value="C:ruffle"/>
    <property type="evidence" value="ECO:0000250"/>
    <property type="project" value="UniProtKB"/>
</dbReference>
<dbReference type="GO" id="GO:0019901">
    <property type="term" value="F:protein kinase binding"/>
    <property type="evidence" value="ECO:0007669"/>
    <property type="project" value="Ensembl"/>
</dbReference>
<dbReference type="GO" id="GO:0017124">
    <property type="term" value="F:SH3 domain binding"/>
    <property type="evidence" value="ECO:0007669"/>
    <property type="project" value="UniProtKB-KW"/>
</dbReference>
<dbReference type="GO" id="GO:0007015">
    <property type="term" value="P:actin filament organization"/>
    <property type="evidence" value="ECO:0000250"/>
    <property type="project" value="UniProtKB"/>
</dbReference>
<dbReference type="GO" id="GO:0050851">
    <property type="term" value="P:antigen receptor-mediated signaling pathway"/>
    <property type="evidence" value="ECO:0000250"/>
    <property type="project" value="UniProtKB"/>
</dbReference>
<dbReference type="GO" id="GO:0050853">
    <property type="term" value="P:B cell receptor signaling pathway"/>
    <property type="evidence" value="ECO:0000250"/>
    <property type="project" value="UniProtKB"/>
</dbReference>
<dbReference type="GO" id="GO:0007155">
    <property type="term" value="P:cell adhesion"/>
    <property type="evidence" value="ECO:0007669"/>
    <property type="project" value="UniProtKB-KW"/>
</dbReference>
<dbReference type="GO" id="GO:0060326">
    <property type="term" value="P:cell chemotaxis"/>
    <property type="evidence" value="ECO:0007669"/>
    <property type="project" value="Ensembl"/>
</dbReference>
<dbReference type="GO" id="GO:0016477">
    <property type="term" value="P:cell migration"/>
    <property type="evidence" value="ECO:0000314"/>
    <property type="project" value="MGI"/>
</dbReference>
<dbReference type="GO" id="GO:0035729">
    <property type="term" value="P:cellular response to hepatocyte growth factor stimulus"/>
    <property type="evidence" value="ECO:0007669"/>
    <property type="project" value="Ensembl"/>
</dbReference>
<dbReference type="GO" id="GO:0086100">
    <property type="term" value="P:endothelin receptor signaling pathway"/>
    <property type="evidence" value="ECO:0000250"/>
    <property type="project" value="UniProtKB"/>
</dbReference>
<dbReference type="GO" id="GO:0007173">
    <property type="term" value="P:epidermal growth factor receptor signaling pathway"/>
    <property type="evidence" value="ECO:0000250"/>
    <property type="project" value="UniProtKB"/>
</dbReference>
<dbReference type="GO" id="GO:0007186">
    <property type="term" value="P:G protein-coupled receptor signaling pathway"/>
    <property type="evidence" value="ECO:0000314"/>
    <property type="project" value="UniProtKB"/>
</dbReference>
<dbReference type="GO" id="GO:0048012">
    <property type="term" value="P:hepatocyte growth factor receptor signaling pathway"/>
    <property type="evidence" value="ECO:0007669"/>
    <property type="project" value="Ensembl"/>
</dbReference>
<dbReference type="GO" id="GO:0008286">
    <property type="term" value="P:insulin receptor signaling pathway"/>
    <property type="evidence" value="ECO:0000250"/>
    <property type="project" value="UniProtKB"/>
</dbReference>
<dbReference type="GO" id="GO:0007229">
    <property type="term" value="P:integrin-mediated signaling pathway"/>
    <property type="evidence" value="ECO:0000250"/>
    <property type="project" value="UniProtKB"/>
</dbReference>
<dbReference type="GO" id="GO:0048011">
    <property type="term" value="P:neurotrophin TRK receptor signaling pathway"/>
    <property type="evidence" value="ECO:0000250"/>
    <property type="project" value="UniProtKB"/>
</dbReference>
<dbReference type="GO" id="GO:0048008">
    <property type="term" value="P:platelet-derived growth factor receptor signaling pathway"/>
    <property type="evidence" value="ECO:0000314"/>
    <property type="project" value="UniProtKB"/>
</dbReference>
<dbReference type="GO" id="GO:0030335">
    <property type="term" value="P:positive regulation of cell migration"/>
    <property type="evidence" value="ECO:0000250"/>
    <property type="project" value="UniProtKB"/>
</dbReference>
<dbReference type="GO" id="GO:0010595">
    <property type="term" value="P:positive regulation of endothelial cell migration"/>
    <property type="evidence" value="ECO:0007669"/>
    <property type="project" value="Ensembl"/>
</dbReference>
<dbReference type="GO" id="GO:0048010">
    <property type="term" value="P:vascular endothelial growth factor receptor signaling pathway"/>
    <property type="evidence" value="ECO:0007669"/>
    <property type="project" value="Ensembl"/>
</dbReference>
<dbReference type="CDD" id="cd11569">
    <property type="entry name" value="FAT-like_BCAR1_C"/>
    <property type="match status" value="1"/>
</dbReference>
<dbReference type="CDD" id="cd11552">
    <property type="entry name" value="Serine_rich_BCAR1"/>
    <property type="match status" value="1"/>
</dbReference>
<dbReference type="CDD" id="cd12001">
    <property type="entry name" value="SH3_BCAR1"/>
    <property type="match status" value="1"/>
</dbReference>
<dbReference type="FunFam" id="1.20.120.830:FF:000001">
    <property type="entry name" value="BCAR1 scaffold protein, Cas family member"/>
    <property type="match status" value="1"/>
</dbReference>
<dbReference type="FunFam" id="1.20.120.230:FF:000001">
    <property type="entry name" value="Breast cancer anti-estrogen resistance 1"/>
    <property type="match status" value="1"/>
</dbReference>
<dbReference type="FunFam" id="2.30.30.40:FF:000009">
    <property type="entry name" value="Breast cancer anti-estrogen resistance 1"/>
    <property type="match status" value="1"/>
</dbReference>
<dbReference type="Gene3D" id="1.20.120.230">
    <property type="entry name" value="Alpha-catenin/vinculin-like"/>
    <property type="match status" value="1"/>
</dbReference>
<dbReference type="Gene3D" id="1.20.120.830">
    <property type="entry name" value="Serine-rich domain"/>
    <property type="match status" value="1"/>
</dbReference>
<dbReference type="Gene3D" id="2.30.30.40">
    <property type="entry name" value="SH3 Domains"/>
    <property type="match status" value="1"/>
</dbReference>
<dbReference type="InterPro" id="IPR046976">
    <property type="entry name" value="BCAR1_C"/>
</dbReference>
<dbReference type="InterPro" id="IPR035745">
    <property type="entry name" value="BCAR1_SH3"/>
</dbReference>
<dbReference type="InterPro" id="IPR021901">
    <property type="entry name" value="CAS_C"/>
</dbReference>
<dbReference type="InterPro" id="IPR037362">
    <property type="entry name" value="CAS_fam"/>
</dbReference>
<dbReference type="InterPro" id="IPR014928">
    <property type="entry name" value="Serine_rich_dom"/>
</dbReference>
<dbReference type="InterPro" id="IPR038319">
    <property type="entry name" value="Serine_rich_sf"/>
</dbReference>
<dbReference type="InterPro" id="IPR036028">
    <property type="entry name" value="SH3-like_dom_sf"/>
</dbReference>
<dbReference type="InterPro" id="IPR001452">
    <property type="entry name" value="SH3_domain"/>
</dbReference>
<dbReference type="PANTHER" id="PTHR10654:SF15">
    <property type="entry name" value="BREAST CANCER ANTI-ESTROGEN RESISTANCE PROTEIN 1"/>
    <property type="match status" value="1"/>
</dbReference>
<dbReference type="PANTHER" id="PTHR10654">
    <property type="entry name" value="CAS SCAFFOLDING PROTEIN"/>
    <property type="match status" value="1"/>
</dbReference>
<dbReference type="Pfam" id="PF12026">
    <property type="entry name" value="CAS_C"/>
    <property type="match status" value="1"/>
</dbReference>
<dbReference type="Pfam" id="PF08824">
    <property type="entry name" value="Serine_rich"/>
    <property type="match status" value="1"/>
</dbReference>
<dbReference type="Pfam" id="PF00018">
    <property type="entry name" value="SH3_1"/>
    <property type="match status" value="1"/>
</dbReference>
<dbReference type="PRINTS" id="PR00452">
    <property type="entry name" value="SH3DOMAIN"/>
</dbReference>
<dbReference type="PRINTS" id="PR01887">
    <property type="entry name" value="SPECTRNALPHA"/>
</dbReference>
<dbReference type="SMART" id="SM00326">
    <property type="entry name" value="SH3"/>
    <property type="match status" value="1"/>
</dbReference>
<dbReference type="SUPFAM" id="SSF50044">
    <property type="entry name" value="SH3-domain"/>
    <property type="match status" value="1"/>
</dbReference>
<dbReference type="PROSITE" id="PS50002">
    <property type="entry name" value="SH3"/>
    <property type="match status" value="1"/>
</dbReference>
<organism>
    <name type="scientific">Mus musculus</name>
    <name type="common">Mouse</name>
    <dbReference type="NCBI Taxonomy" id="10090"/>
    <lineage>
        <taxon>Eukaryota</taxon>
        <taxon>Metazoa</taxon>
        <taxon>Chordata</taxon>
        <taxon>Craniata</taxon>
        <taxon>Vertebrata</taxon>
        <taxon>Euteleostomi</taxon>
        <taxon>Mammalia</taxon>
        <taxon>Eutheria</taxon>
        <taxon>Euarchontoglires</taxon>
        <taxon>Glires</taxon>
        <taxon>Rodentia</taxon>
        <taxon>Myomorpha</taxon>
        <taxon>Muroidea</taxon>
        <taxon>Muridae</taxon>
        <taxon>Murinae</taxon>
        <taxon>Mus</taxon>
        <taxon>Mus</taxon>
    </lineage>
</organism>
<feature type="chain" id="PRO_0000064855" description="Breast cancer anti-estrogen resistance protein 1">
    <location>
        <begin position="1"/>
        <end position="874"/>
    </location>
</feature>
<feature type="domain" description="SH3" evidence="4">
    <location>
        <begin position="3"/>
        <end position="65"/>
    </location>
</feature>
<feature type="region of interest" description="Disordered" evidence="5">
    <location>
        <begin position="71"/>
        <end position="177"/>
    </location>
</feature>
<feature type="region of interest" description="Substrate for kinases" evidence="1">
    <location>
        <begin position="119"/>
        <end position="420"/>
    </location>
</feature>
<feature type="region of interest" description="Disordered" evidence="5">
    <location>
        <begin position="374"/>
        <end position="394"/>
    </location>
</feature>
<feature type="region of interest" description="Disordered" evidence="5">
    <location>
        <begin position="409"/>
        <end position="450"/>
    </location>
</feature>
<feature type="region of interest" description="Disordered" evidence="5">
    <location>
        <begin position="610"/>
        <end position="662"/>
    </location>
</feature>
<feature type="region of interest" description="Divergent helix-loop-helix motif">
    <location>
        <begin position="750"/>
        <end position="800"/>
    </location>
</feature>
<feature type="short sequence motif" description="SH3-binding" evidence="3">
    <location>
        <begin position="639"/>
        <end position="647"/>
    </location>
</feature>
<feature type="compositionally biased region" description="Pro residues" evidence="5">
    <location>
        <begin position="73"/>
        <end position="88"/>
    </location>
</feature>
<feature type="compositionally biased region" description="Polar residues" evidence="5">
    <location>
        <begin position="139"/>
        <end position="155"/>
    </location>
</feature>
<feature type="compositionally biased region" description="Low complexity" evidence="5">
    <location>
        <begin position="374"/>
        <end position="388"/>
    </location>
</feature>
<feature type="compositionally biased region" description="Basic and acidic residues" evidence="5">
    <location>
        <begin position="420"/>
        <end position="430"/>
    </location>
</feature>
<feature type="compositionally biased region" description="Low complexity" evidence="5">
    <location>
        <begin position="431"/>
        <end position="448"/>
    </location>
</feature>
<feature type="compositionally biased region" description="Polar residues" evidence="5">
    <location>
        <begin position="621"/>
        <end position="659"/>
    </location>
</feature>
<feature type="modified residue" description="N-acetylmethionine" evidence="2">
    <location>
        <position position="1"/>
    </location>
</feature>
<feature type="modified residue" description="Phosphotyrosine" evidence="19">
    <location>
        <position position="132"/>
    </location>
</feature>
<feature type="modified residue" description="Phosphoserine" evidence="2">
    <location>
        <position position="143"/>
    </location>
</feature>
<feature type="modified residue" description="Phosphotyrosine" evidence="21">
    <location>
        <position position="238"/>
    </location>
</feature>
<feature type="modified residue" description="Phosphotyrosine" evidence="20">
    <location>
        <position position="253"/>
    </location>
</feature>
<feature type="modified residue" description="Phosphothreonine" evidence="2">
    <location>
        <position position="273"/>
    </location>
</feature>
<feature type="modified residue" description="Phosphoserine" evidence="2">
    <location>
        <position position="296"/>
    </location>
</feature>
<feature type="modified residue" description="Phosphotyrosine" evidence="19">
    <location>
        <position position="366"/>
    </location>
</feature>
<feature type="modified residue" description="Phosphotyrosine" evidence="19">
    <location>
        <position position="376"/>
    </location>
</feature>
<feature type="modified residue" description="Phosphotyrosine" evidence="19">
    <location>
        <position position="414"/>
    </location>
</feature>
<feature type="modified residue" description="Phosphoserine" evidence="2">
    <location>
        <position position="432"/>
    </location>
</feature>
<feature type="modified residue" description="Phosphoserine" evidence="2">
    <location>
        <position position="441"/>
    </location>
</feature>
<feature type="modified residue" description="Phosphoserine" evidence="2">
    <location>
        <position position="643"/>
    </location>
</feature>
<feature type="splice variant" id="VSP_004134" description="In isoform Cas-A." evidence="17">
    <original>MTVP</original>
    <variation>MKYL</variation>
    <location>
        <begin position="1"/>
        <end position="4"/>
    </location>
</feature>
<feature type="sequence conflict" description="In Ref. 1; AAA93381/AAA93248." evidence="18" ref="1">
    <original>V</original>
    <variation>A</variation>
    <location>
        <position position="72"/>
    </location>
</feature>
<feature type="helix" evidence="22">
    <location>
        <begin position="742"/>
        <end position="774"/>
    </location>
</feature>
<feature type="helix" evidence="22">
    <location>
        <begin position="779"/>
        <end position="806"/>
    </location>
</feature>
<feature type="helix" evidence="22">
    <location>
        <begin position="810"/>
        <end position="839"/>
    </location>
</feature>
<feature type="helix" evidence="22">
    <location>
        <begin position="844"/>
        <end position="872"/>
    </location>
</feature>
<gene>
    <name type="primary">Bcar1</name>
    <name type="synonym">Cas</name>
    <name type="synonym">Crkas</name>
</gene>
<name>BCAR1_MOUSE</name>
<accession>Q61140</accession>
<accession>Q60869</accession>
<accession>Q6PFF9</accession>
<reference key="1">
    <citation type="journal article" date="1995" name="Proc. Natl. Acad. Sci. U.S.A.">
        <title>Interaction between focal adhesion kinase and Crk-associated tyrosine kinase substrate p130Cas.</title>
        <authorList>
            <person name="Polte T.R."/>
            <person name="Hanks S.K."/>
        </authorList>
    </citation>
    <scope>NUCLEOTIDE SEQUENCE [MRNA] (ISOFORMS CAS-A AND CAS-B)</scope>
    <scope>INTERACTION WITH PTK2/FAK1</scope>
    <source>
        <tissue>Embryo</tissue>
    </source>
</reference>
<reference key="2">
    <citation type="journal article" date="2005" name="Science">
        <title>The transcriptional landscape of the mammalian genome.</title>
        <authorList>
            <person name="Carninci P."/>
            <person name="Kasukawa T."/>
            <person name="Katayama S."/>
            <person name="Gough J."/>
            <person name="Frith M.C."/>
            <person name="Maeda N."/>
            <person name="Oyama R."/>
            <person name="Ravasi T."/>
            <person name="Lenhard B."/>
            <person name="Wells C."/>
            <person name="Kodzius R."/>
            <person name="Shimokawa K."/>
            <person name="Bajic V.B."/>
            <person name="Brenner S.E."/>
            <person name="Batalov S."/>
            <person name="Forrest A.R."/>
            <person name="Zavolan M."/>
            <person name="Davis M.J."/>
            <person name="Wilming L.G."/>
            <person name="Aidinis V."/>
            <person name="Allen J.E."/>
            <person name="Ambesi-Impiombato A."/>
            <person name="Apweiler R."/>
            <person name="Aturaliya R.N."/>
            <person name="Bailey T.L."/>
            <person name="Bansal M."/>
            <person name="Baxter L."/>
            <person name="Beisel K.W."/>
            <person name="Bersano T."/>
            <person name="Bono H."/>
            <person name="Chalk A.M."/>
            <person name="Chiu K.P."/>
            <person name="Choudhary V."/>
            <person name="Christoffels A."/>
            <person name="Clutterbuck D.R."/>
            <person name="Crowe M.L."/>
            <person name="Dalla E."/>
            <person name="Dalrymple B.P."/>
            <person name="de Bono B."/>
            <person name="Della Gatta G."/>
            <person name="di Bernardo D."/>
            <person name="Down T."/>
            <person name="Engstrom P."/>
            <person name="Fagiolini M."/>
            <person name="Faulkner G."/>
            <person name="Fletcher C.F."/>
            <person name="Fukushima T."/>
            <person name="Furuno M."/>
            <person name="Futaki S."/>
            <person name="Gariboldi M."/>
            <person name="Georgii-Hemming P."/>
            <person name="Gingeras T.R."/>
            <person name="Gojobori T."/>
            <person name="Green R.E."/>
            <person name="Gustincich S."/>
            <person name="Harbers M."/>
            <person name="Hayashi Y."/>
            <person name="Hensch T.K."/>
            <person name="Hirokawa N."/>
            <person name="Hill D."/>
            <person name="Huminiecki L."/>
            <person name="Iacono M."/>
            <person name="Ikeo K."/>
            <person name="Iwama A."/>
            <person name="Ishikawa T."/>
            <person name="Jakt M."/>
            <person name="Kanapin A."/>
            <person name="Katoh M."/>
            <person name="Kawasawa Y."/>
            <person name="Kelso J."/>
            <person name="Kitamura H."/>
            <person name="Kitano H."/>
            <person name="Kollias G."/>
            <person name="Krishnan S.P."/>
            <person name="Kruger A."/>
            <person name="Kummerfeld S.K."/>
            <person name="Kurochkin I.V."/>
            <person name="Lareau L.F."/>
            <person name="Lazarevic D."/>
            <person name="Lipovich L."/>
            <person name="Liu J."/>
            <person name="Liuni S."/>
            <person name="McWilliam S."/>
            <person name="Madan Babu M."/>
            <person name="Madera M."/>
            <person name="Marchionni L."/>
            <person name="Matsuda H."/>
            <person name="Matsuzawa S."/>
            <person name="Miki H."/>
            <person name="Mignone F."/>
            <person name="Miyake S."/>
            <person name="Morris K."/>
            <person name="Mottagui-Tabar S."/>
            <person name="Mulder N."/>
            <person name="Nakano N."/>
            <person name="Nakauchi H."/>
            <person name="Ng P."/>
            <person name="Nilsson R."/>
            <person name="Nishiguchi S."/>
            <person name="Nishikawa S."/>
            <person name="Nori F."/>
            <person name="Ohara O."/>
            <person name="Okazaki Y."/>
            <person name="Orlando V."/>
            <person name="Pang K.C."/>
            <person name="Pavan W.J."/>
            <person name="Pavesi G."/>
            <person name="Pesole G."/>
            <person name="Petrovsky N."/>
            <person name="Piazza S."/>
            <person name="Reed J."/>
            <person name="Reid J.F."/>
            <person name="Ring B.Z."/>
            <person name="Ringwald M."/>
            <person name="Rost B."/>
            <person name="Ruan Y."/>
            <person name="Salzberg S.L."/>
            <person name="Sandelin A."/>
            <person name="Schneider C."/>
            <person name="Schoenbach C."/>
            <person name="Sekiguchi K."/>
            <person name="Semple C.A."/>
            <person name="Seno S."/>
            <person name="Sessa L."/>
            <person name="Sheng Y."/>
            <person name="Shibata Y."/>
            <person name="Shimada H."/>
            <person name="Shimada K."/>
            <person name="Silva D."/>
            <person name="Sinclair B."/>
            <person name="Sperling S."/>
            <person name="Stupka E."/>
            <person name="Sugiura K."/>
            <person name="Sultana R."/>
            <person name="Takenaka Y."/>
            <person name="Taki K."/>
            <person name="Tammoja K."/>
            <person name="Tan S.L."/>
            <person name="Tang S."/>
            <person name="Taylor M.S."/>
            <person name="Tegner J."/>
            <person name="Teichmann S.A."/>
            <person name="Ueda H.R."/>
            <person name="van Nimwegen E."/>
            <person name="Verardo R."/>
            <person name="Wei C.L."/>
            <person name="Yagi K."/>
            <person name="Yamanishi H."/>
            <person name="Zabarovsky E."/>
            <person name="Zhu S."/>
            <person name="Zimmer A."/>
            <person name="Hide W."/>
            <person name="Bult C."/>
            <person name="Grimmond S.M."/>
            <person name="Teasdale R.D."/>
            <person name="Liu E.T."/>
            <person name="Brusic V."/>
            <person name="Quackenbush J."/>
            <person name="Wahlestedt C."/>
            <person name="Mattick J.S."/>
            <person name="Hume D.A."/>
            <person name="Kai C."/>
            <person name="Sasaki D."/>
            <person name="Tomaru Y."/>
            <person name="Fukuda S."/>
            <person name="Kanamori-Katayama M."/>
            <person name="Suzuki M."/>
            <person name="Aoki J."/>
            <person name="Arakawa T."/>
            <person name="Iida J."/>
            <person name="Imamura K."/>
            <person name="Itoh M."/>
            <person name="Kato T."/>
            <person name="Kawaji H."/>
            <person name="Kawagashira N."/>
            <person name="Kawashima T."/>
            <person name="Kojima M."/>
            <person name="Kondo S."/>
            <person name="Konno H."/>
            <person name="Nakano K."/>
            <person name="Ninomiya N."/>
            <person name="Nishio T."/>
            <person name="Okada M."/>
            <person name="Plessy C."/>
            <person name="Shibata K."/>
            <person name="Shiraki T."/>
            <person name="Suzuki S."/>
            <person name="Tagami M."/>
            <person name="Waki K."/>
            <person name="Watahiki A."/>
            <person name="Okamura-Oho Y."/>
            <person name="Suzuki H."/>
            <person name="Kawai J."/>
            <person name="Hayashizaki Y."/>
        </authorList>
    </citation>
    <scope>NUCLEOTIDE SEQUENCE [LARGE SCALE MRNA]</scope>
    <source>
        <strain>C57BL/6J</strain>
        <tissue>Placenta</tissue>
    </source>
</reference>
<reference key="3">
    <citation type="journal article" date="2004" name="Genome Res.">
        <title>The status, quality, and expansion of the NIH full-length cDNA project: the Mammalian Gene Collection (MGC).</title>
        <authorList>
            <consortium name="The MGC Project Team"/>
        </authorList>
    </citation>
    <scope>NUCLEOTIDE SEQUENCE [LARGE SCALE MRNA]</scope>
    <source>
        <strain>C57BL/6J</strain>
    </source>
</reference>
<reference key="4">
    <citation type="journal article" date="1999" name="J. Immunol.">
        <title>AND-34, a novel p130Cas-binding thymic stromal cell protein regulated by adhesion and inflammatory cytokines.</title>
        <authorList>
            <person name="Cai D."/>
            <person name="Clayton L.K."/>
            <person name="Smolyar A."/>
            <person name="Lerner A."/>
        </authorList>
    </citation>
    <scope>INTERACTION WITH BCAR3</scope>
</reference>
<reference key="5">
    <citation type="journal article" date="2000" name="Exp. Cell Res.">
        <title>Crk-associated substrate p130(Cas) interacts with nephrocystin and both proteins localize to cell-cell contacts of polarized epithelial cells.</title>
        <authorList>
            <person name="Donaldson J.C."/>
            <person name="Dempsey P.J."/>
            <person name="Reddy S."/>
            <person name="Bouton A.H."/>
            <person name="Coffey R.J."/>
            <person name="Hanks S.K."/>
        </authorList>
    </citation>
    <scope>INTERACTION WITH NPHP1</scope>
</reference>
<reference key="6">
    <citation type="journal article" date="2000" name="J. Biol. Chem.">
        <title>p130Cas regulates the activity of AND-34, a novel Ral, Rap1, and R-Ras guanine nucleotide exchange factor.</title>
        <authorList>
            <person name="Gotoh T."/>
            <person name="Cai D."/>
            <person name="Tian X."/>
            <person name="Feig L.A."/>
            <person name="Lerner A."/>
        </authorList>
    </citation>
    <scope>INTERACTION WITH BCAR3</scope>
</reference>
<reference key="7">
    <citation type="journal article" date="2000" name="J. Biol. Chem.">
        <title>Chat, a Cas/HEF1-associated adaptor protein that integrates multiple signaling pathways.</title>
        <authorList>
            <person name="Sakakibara A."/>
            <person name="Hattori S."/>
        </authorList>
    </citation>
    <scope>INTERACTION WITH SH2D3C</scope>
</reference>
<reference key="8">
    <citation type="journal article" date="2003" name="J. Biol. Chem.">
        <title>A novel hematopoietic adaptor protein, Chat-H, positively regulates T cell receptor-mediated interleukin-2 production by Jurkat cells.</title>
        <authorList>
            <person name="Sakakibara A."/>
            <person name="Hattori S."/>
            <person name="Nakamura S."/>
            <person name="Katagiri T."/>
        </authorList>
    </citation>
    <scope>INTERACTION WITH SH2D3C</scope>
    <source>
        <tissue>Spleen</tissue>
    </source>
</reference>
<reference key="9">
    <citation type="journal article" date="2005" name="Nat. Biotechnol.">
        <title>Immunoaffinity profiling of tyrosine phosphorylation in cancer cells.</title>
        <authorList>
            <person name="Rush J."/>
            <person name="Moritz A."/>
            <person name="Lee K.A."/>
            <person name="Guo A."/>
            <person name="Goss V.L."/>
            <person name="Spek E.J."/>
            <person name="Zhang H."/>
            <person name="Zha X.-M."/>
            <person name="Polakiewicz R.D."/>
            <person name="Comb M.J."/>
        </authorList>
    </citation>
    <scope>PHOSPHORYLATION [LARGE SCALE ANALYSIS] AT TYR-132; TYR-366; TYR-376 AND TYR-414</scope>
    <scope>IDENTIFICATION BY MASS SPECTROMETRY [LARGE SCALE ANALYSIS]</scope>
</reference>
<reference key="10">
    <citation type="journal article" date="2006" name="Immunity">
        <title>The hematopoietic isoform of Cas-Hef1-associated signal transducer regulates chemokine-induced inside-out signaling and T cell trafficking.</title>
        <authorList>
            <person name="Regelmann A.G."/>
            <person name="Danzl N.M."/>
            <person name="Wanjalla C."/>
            <person name="Alexandropoulos K."/>
        </authorList>
    </citation>
    <scope>INTERACTION WITH SH2D3C</scope>
</reference>
<reference key="11">
    <citation type="journal article" date="2008" name="J. Proteome Res.">
        <title>Large-scale identification and evolution indexing of tyrosine phosphorylation sites from murine brain.</title>
        <authorList>
            <person name="Ballif B.A."/>
            <person name="Carey G.R."/>
            <person name="Sunyaev S.R."/>
            <person name="Gygi S.P."/>
        </authorList>
    </citation>
    <scope>IDENTIFICATION BY MASS SPECTROMETRY [LARGE SCALE ANALYSIS]</scope>
    <source>
        <tissue>Brain</tissue>
    </source>
</reference>
<reference key="12">
    <citation type="journal article" date="2009" name="Mol. Cell. Proteomics">
        <title>Large scale localization of protein phosphorylation by use of electron capture dissociation mass spectrometry.</title>
        <authorList>
            <person name="Sweet S.M."/>
            <person name="Bailey C.M."/>
            <person name="Cunningham D.L."/>
            <person name="Heath J.K."/>
            <person name="Cooper H.J."/>
        </authorList>
    </citation>
    <scope>PHOSPHORYLATION [LARGE SCALE ANALYSIS] AT TYR-253</scope>
    <scope>IDENTIFICATION BY MASS SPECTROMETRY [LARGE SCALE ANALYSIS]</scope>
    <source>
        <tissue>Embryonic fibroblast</tissue>
    </source>
</reference>
<reference key="13">
    <citation type="journal article" date="2009" name="Mol. Vis.">
        <title>Loss of AND-34/BCAR3 expression in mice results in rupture of the adult lens.</title>
        <authorList>
            <person name="Near R.I."/>
            <person name="Smith R.S."/>
            <person name="Toselli P.A."/>
            <person name="Freddo T.F."/>
            <person name="Bloom A.B."/>
            <person name="Vanden Borre P."/>
            <person name="Seldin D.C."/>
            <person name="Lerner A."/>
        </authorList>
    </citation>
    <scope>TISSUE SPECIFICITY</scope>
</reference>
<reference key="14">
    <citation type="journal article" date="2010" name="Cell">
        <title>A tissue-specific atlas of mouse protein phosphorylation and expression.</title>
        <authorList>
            <person name="Huttlin E.L."/>
            <person name="Jedrychowski M.P."/>
            <person name="Elias J.E."/>
            <person name="Goswami T."/>
            <person name="Rad R."/>
            <person name="Beausoleil S.A."/>
            <person name="Villen J."/>
            <person name="Haas W."/>
            <person name="Sowa M.E."/>
            <person name="Gygi S.P."/>
        </authorList>
    </citation>
    <scope>PHOSPHORYLATION [LARGE SCALE ANALYSIS] AT TYR-238</scope>
    <scope>IDENTIFICATION BY MASS SPECTROMETRY [LARGE SCALE ANALYSIS]</scope>
    <source>
        <tissue>Brain</tissue>
        <tissue>Heart</tissue>
        <tissue>Lung</tissue>
        <tissue>Spleen</tissue>
        <tissue>Testis</tissue>
    </source>
</reference>
<reference key="15">
    <citation type="journal article" date="2010" name="J. Neurosci.">
        <title>The SRC homology 2 domain protein Shep1 plays an important role in the penetration of olfactory sensory axons into the forebrain.</title>
        <authorList>
            <person name="Wang L."/>
            <person name="Vervoort V."/>
            <person name="Wallez Y."/>
            <person name="Core N."/>
            <person name="Cremer H."/>
            <person name="Pasquale E.B."/>
        </authorList>
    </citation>
    <scope>SUBCELLULAR LOCATION</scope>
    <scope>TISSUE SPECIFICITY</scope>
</reference>
<reference key="16">
    <citation type="journal article" date="2012" name="Mol. Cell. Biol.">
        <title>Protein tyrosine phosphatase alpha phosphotyrosyl-789 binds BCAR3 to position Cas for activation at integrin-mediated focal adhesions.</title>
        <authorList>
            <person name="Sun G."/>
            <person name="Cheng S.Y."/>
            <person name="Chen M."/>
            <person name="Lim C.J."/>
            <person name="Pallen C.J."/>
        </authorList>
    </citation>
    <scope>IDENTIFICATION IN A COMPLEX WITH PTPRA; BCAR3 AND SRC</scope>
    <scope>SUBCELLULAR LOCATION</scope>
</reference>
<reference key="17">
    <citation type="journal article" date="2014" name="Breast Cancer Res.">
        <title>Breast cancer anti-estrogen resistance 3 inhibits transforming growth factor beta/Smad signaling and associates with favorable breast cancer disease outcomes.</title>
        <authorList>
            <person name="Guo J."/>
            <person name="Canaff L."/>
            <person name="Rajadurai C.V."/>
            <person name="Fils-Aime N."/>
            <person name="Tian J."/>
            <person name="Dai M."/>
            <person name="Korah J."/>
            <person name="Villatoro M."/>
            <person name="Park M."/>
            <person name="Ali S."/>
            <person name="Lebrun J.J."/>
        </authorList>
    </citation>
    <scope>FUNCTION</scope>
    <scope>INTERACTION WITH SMAD2 AND SMAD3</scope>
</reference>
<comment type="function">
    <text evidence="2 15">Docking protein which plays a central coordinating role for tyrosine kinase-based signaling related to cell adhesion (By similarity). Implicated in induction of cell migration and cell branching (PubMed:25499443). Involved in the BCAR3-mediated inhibition of TGFB signaling (PubMed:25499443).</text>
</comment>
<comment type="subunit">
    <text evidence="2 6 7 8 9 10 11 14 15 16">Forms complexes in vivo with PTK2/FAK1, adapter protein CRKL and LYN kinase. Can heterodimerize with NEDD9. Component of a complex comprised of SH2D3C, BCAR1/CAS, and CRK (By similarity). Within the complex, interacts with SH2D3C (via C-terminus), and CRK (By similarity). Part of a complex comprised of PTPRA, BCAR1, BCAR3 (via SH2 domain) and SRC; the formation of the complex is dependent on integrin mediated-tyrosine phosphorylation of PTPRA (PubMed:22801373). Interacts with BCAR3 (via Ras-GEF domain); the interaction regulates adhesion-dependent serine phosphorylation (PubMed:10896938, PubMed:22801373). Interacts with SMAD2 and SMAD3 (PubMed:25499443). Interacts with NPHP1 (PubMed:10739664). Interacts with PTK2B/PYK2 (By similarity). Interacts (via C-terminus) with SH2D3C/CHAT isoform 2 (via C-terminus) (PubMed:10692442, PubMed:12486027, PubMed:17174122). Interacts with activated CSPG4. Interacts with BMX, INPPL1/SHIP2 and PEAK1 (By similarity). Part of a collagen stimulated complex involved in cell migration composed of CDC42, CRK, TNK2 and BCAR1/p130cas (By similarity). Interacts with TNK2 via SH3 domains. Interacts (when tyrosine-phosphorylated) with tensin TNS1; the interaction is increased by phosphorylation of TNS1 (By similarity).</text>
</comment>
<comment type="interaction">
    <interactant intactId="EBI-77088">
        <id>Q61140</id>
    </interactant>
    <interactant intactId="EBI-77230">
        <id>Q9QY53</id>
        <label>Nphp1</label>
    </interactant>
    <organismsDiffer>false</organismsDiffer>
    <experiments>2</experiments>
</comment>
<comment type="interaction">
    <interactant intactId="EBI-77088">
        <id>Q61140</id>
    </interactant>
    <interactant intactId="EBI-77070">
        <id>P34152</id>
        <label>Ptk2</label>
    </interactant>
    <organismsDiffer>false</organismsDiffer>
    <experiments>3</experiments>
</comment>
<comment type="interaction">
    <interactant intactId="EBI-77088">
        <id>Q61140</id>
    </interactant>
    <interactant intactId="EBI-775592">
        <id>Q9QWI6</id>
        <label>Srcin1</label>
    </interactant>
    <organismsDiffer>false</organismsDiffer>
    <experiments>2</experiments>
</comment>
<comment type="interaction">
    <interactant intactId="EBI-77088">
        <id>Q61140</id>
    </interactant>
    <interactant intactId="EBI-968788">
        <id>P18031</id>
        <label>PTPN1</label>
    </interactant>
    <organismsDiffer>true</organismsDiffer>
    <experiments>5</experiments>
</comment>
<comment type="subcellular location">
    <subcellularLocation>
        <location evidence="14">Cell junction</location>
        <location evidence="14">Focal adhesion</location>
    </subcellularLocation>
    <subcellularLocation>
        <location evidence="14">Cytoplasm</location>
    </subcellularLocation>
    <subcellularLocation>
        <location evidence="13">Cell projection</location>
        <location evidence="13">Axon</location>
    </subcellularLocation>
    <text evidence="14">Unphosphorylated form localizes in the cytoplasm (PubMed:22801373). Localizes to focal adhesion sites following integrin engagement (PubMed:22801373).</text>
</comment>
<comment type="alternative products">
    <event type="alternative splicing"/>
    <isoform>
        <id>Q61140-1</id>
        <name>Cas-B</name>
        <sequence type="displayed"/>
    </isoform>
    <isoform>
        <id>Q61140-2</id>
        <name>Cas-A</name>
        <sequence type="described" ref="VSP_004134"/>
    </isoform>
</comment>
<comment type="tissue specificity">
    <text evidence="12 13">Expressed in olfactory sensory neurons (at protein level) (PubMed:20881139). Expressed abundantly in the liver, lung, brain, and at lower levels in the heart (at protein level) (PubMed:19365570).</text>
</comment>
<comment type="domain">
    <text>Contains a central domain (substrate domain) containing multiple potential SH2-binding sites and a C-terminal domain containing a divergent helix-loop-helix (HLH) motif. The SH2-binding sites putatively bind CRK, NCK and ABL SH2 domains. The HLH motif is absolutely required for the induction of pseudohyphal growth in yeast and mediates heterodimerization with NEDD9.</text>
</comment>
<comment type="domain">
    <text evidence="1">A serine-rich region promotes activation of the serum response element (SRE).</text>
</comment>
<comment type="domain">
    <text>The SH3 domain is necessary for the localization of the protein to focal adhesions and interacts with one proline-rich region of PTK2/FAK1.</text>
</comment>
<comment type="PTM">
    <text evidence="1">PTK2/FAK1 activation mediates phosphorylation at the YDYVHL motif; phosphorylation is most likely catalyzed by SRC family members. SRC-family kinases are recruited to the phosphorylated sites and can phosphorylate other tyrosine residues. Tyrosine phosphorylation is triggered by integrin mediated adhesion of cells to the extracellular matrix (By similarity).</text>
</comment>
<comment type="PTM">
    <text evidence="1">Dephosphorylated by PTPN14 at Tyr-132.</text>
</comment>
<comment type="PTM">
    <text evidence="2">Phosphorylated by SRC kinase in a EDN1- and PTK2B-mediated manner; phosphorylation strengthens its interaction with BCAR3 as part of the PTK2B/BCAR1/BCAR3/RAP1 signaling pathway.</text>
</comment>
<comment type="similarity">
    <text evidence="18">Belongs to the CAS family.</text>
</comment>
<proteinExistence type="evidence at protein level"/>
<evidence type="ECO:0000250" key="1"/>
<evidence type="ECO:0000250" key="2">
    <source>
        <dbReference type="UniProtKB" id="P56945"/>
    </source>
</evidence>
<evidence type="ECO:0000255" key="3"/>
<evidence type="ECO:0000255" key="4">
    <source>
        <dbReference type="PROSITE-ProRule" id="PRU00192"/>
    </source>
</evidence>
<evidence type="ECO:0000256" key="5">
    <source>
        <dbReference type="SAM" id="MobiDB-lite"/>
    </source>
</evidence>
<evidence type="ECO:0000269" key="6">
    <source>
    </source>
</evidence>
<evidence type="ECO:0000269" key="7">
    <source>
    </source>
</evidence>
<evidence type="ECO:0000269" key="8">
    <source>
    </source>
</evidence>
<evidence type="ECO:0000269" key="9">
    <source>
    </source>
</evidence>
<evidence type="ECO:0000269" key="10">
    <source>
    </source>
</evidence>
<evidence type="ECO:0000269" key="11">
    <source>
    </source>
</evidence>
<evidence type="ECO:0000269" key="12">
    <source>
    </source>
</evidence>
<evidence type="ECO:0000269" key="13">
    <source>
    </source>
</evidence>
<evidence type="ECO:0000269" key="14">
    <source>
    </source>
</evidence>
<evidence type="ECO:0000269" key="15">
    <source>
    </source>
</evidence>
<evidence type="ECO:0000269" key="16">
    <source>
    </source>
</evidence>
<evidence type="ECO:0000303" key="17">
    <source>
    </source>
</evidence>
<evidence type="ECO:0000305" key="18"/>
<evidence type="ECO:0007744" key="19">
    <source>
    </source>
</evidence>
<evidence type="ECO:0007744" key="20">
    <source>
    </source>
</evidence>
<evidence type="ECO:0007744" key="21">
    <source>
    </source>
</evidence>
<evidence type="ECO:0007829" key="22">
    <source>
        <dbReference type="PDB" id="5W93"/>
    </source>
</evidence>
<protein>
    <recommendedName>
        <fullName>Breast cancer anti-estrogen resistance protein 1</fullName>
    </recommendedName>
    <alternativeName>
        <fullName>CRK-associated substrate</fullName>
    </alternativeName>
    <alternativeName>
        <fullName>p130cas</fullName>
    </alternativeName>
</protein>
<keyword id="KW-0002">3D-structure</keyword>
<keyword id="KW-0007">Acetylation</keyword>
<keyword id="KW-0025">Alternative splicing</keyword>
<keyword id="KW-0130">Cell adhesion</keyword>
<keyword id="KW-0965">Cell junction</keyword>
<keyword id="KW-0966">Cell projection</keyword>
<keyword id="KW-0963">Cytoplasm</keyword>
<keyword id="KW-0597">Phosphoprotein</keyword>
<keyword id="KW-1185">Reference proteome</keyword>
<keyword id="KW-0728">SH3 domain</keyword>
<keyword id="KW-0729">SH3-binding</keyword>
<sequence length="874" mass="94285">MTVPNVLAKALYDNVAESPDELSFRKGDIMTVLERDTQGLDGWWLCSLHGRQGIVPGNRLKILVGMYDKKPVGPGPGPPATPPQPQPSLPQGVHAPVPPASQYSPMLPTAYQPQSDNVYLVPTPSKTQQGLYQAPGPNPQFQSPPAKQTSTFSKQTPHHSFPSPATDLYQVPPGPGSPAQDIYQVPPSAGIGHDIYQVPPSLDTRGWEGTKPPAKVVVPTRVGQGYVYEAAQTEQDEYDTPRHLLAPGPQDIYDVPPVRGLLPNQYGQEVYDTPPMAVKGPNGRDPLLDVYDVPPSVEKGLLSSSHHSVYDVPPSVSKDVPDGPLLREETYDVPPAFAKPKPFDPTRHPLILAAPPPDSPAAEDVYDVPPPAPDLYDVPPGLRRPGPGTLYDVPRERVLPPEVADGSVVDDGVYAVPPPAEREAPTDGKRLSASSTGSTRSSQSASSLEVVVPGREPLELEVAVESLARLQQGVSTTVAHLLDLVGSASGPGGWRGTSEPQEPPAQDLKAAVAAVHGAVHELLEFARGAVSNATHTSDRTLHAKLSRQLQKMEDVYQTLVVHGQVLDSGRGSPGFTPEDLDRLVACSRAVPEDAKQLASFLHGNASLLFRRTKAPGPGPEGSSSLHPNPTDKASSIQSRPLPSPPKFTSQDSPDGQYENSEGGWMEDYDYVHLQGKEEFEKTQKELLERGNIMRQGKGQLELQQLKQFERLEQEVSRPIDHDLANWTPAQPLVPGRTGGLGPSDRQLLLFYLEQCEANLTTLTDAVDAFFTAVATNQPPKIFVAHSKFVILSAHKLVFIGDTLSRQAKAADVRSQVTHYSNLLCDLLRGIVATTKAAALQYPSPSAAQDMVDRVKELGHSTQQFRRVLGQLAAA</sequence>